<keyword id="KW-0007">Acetylation</keyword>
<keyword id="KW-0963">Cytoplasm</keyword>
<keyword id="KW-0341">Growth regulation</keyword>
<keyword id="KW-0648">Protein biosynthesis</keyword>
<organism>
    <name type="scientific">Brassica oleracea var. botrytis</name>
    <name type="common">Cauliflower</name>
    <dbReference type="NCBI Taxonomy" id="3715"/>
    <lineage>
        <taxon>Eukaryota</taxon>
        <taxon>Viridiplantae</taxon>
        <taxon>Streptophyta</taxon>
        <taxon>Embryophyta</taxon>
        <taxon>Tracheophyta</taxon>
        <taxon>Spermatophyta</taxon>
        <taxon>Magnoliopsida</taxon>
        <taxon>eudicotyledons</taxon>
        <taxon>Gunneridae</taxon>
        <taxon>Pentapetalae</taxon>
        <taxon>rosids</taxon>
        <taxon>malvids</taxon>
        <taxon>Brassicales</taxon>
        <taxon>Brassicaceae</taxon>
        <taxon>Brassiceae</taxon>
        <taxon>Brassica</taxon>
    </lineage>
</organism>
<comment type="function">
    <text evidence="1 3">Directs the termination of nascent peptide synthesis (translation) in response to the termination codons UAA, UAG and UGA (By similarity). Modulates plant growth and development (PubMed:21175633).</text>
</comment>
<comment type="subunit">
    <text evidence="5">Heterodimer of two subunits, one of which binds GTP.</text>
</comment>
<comment type="subcellular location">
    <subcellularLocation>
        <location evidence="1">Cytoplasm</location>
    </subcellularLocation>
</comment>
<comment type="miscellaneous">
    <text evidence="3">Plants silencing ERF1-3 show increased elongation of the leaf petiole.</text>
</comment>
<comment type="similarity">
    <text evidence="5">Belongs to the eukaryotic release factor 1 family.</text>
</comment>
<gene>
    <name evidence="5" type="primary">ERF1-3</name>
</gene>
<dbReference type="EMBL" id="GU183404">
    <property type="protein sequence ID" value="ACZ71035.1"/>
    <property type="molecule type" value="mRNA"/>
</dbReference>
<dbReference type="SMR" id="D2K760"/>
<dbReference type="GO" id="GO:0005737">
    <property type="term" value="C:cytoplasm"/>
    <property type="evidence" value="ECO:0007669"/>
    <property type="project" value="UniProtKB-SubCell"/>
</dbReference>
<dbReference type="GO" id="GO:0003747">
    <property type="term" value="F:translation release factor activity"/>
    <property type="evidence" value="ECO:0007669"/>
    <property type="project" value="InterPro"/>
</dbReference>
<dbReference type="FunFam" id="3.30.420.60:FF:000001">
    <property type="entry name" value="Eukaryotic peptide chain release factor subunit 1"/>
    <property type="match status" value="1"/>
</dbReference>
<dbReference type="FunFam" id="3.30.960.10:FF:000001">
    <property type="entry name" value="Eukaryotic peptide chain release factor subunit 1"/>
    <property type="match status" value="1"/>
</dbReference>
<dbReference type="FunFam" id="3.30.1330.30:FF:000006">
    <property type="entry name" value="Peptide chain release factor subunit 1"/>
    <property type="match status" value="1"/>
</dbReference>
<dbReference type="Gene3D" id="3.30.1330.30">
    <property type="match status" value="1"/>
</dbReference>
<dbReference type="Gene3D" id="3.30.960.10">
    <property type="entry name" value="eRF1 domain 1"/>
    <property type="match status" value="1"/>
</dbReference>
<dbReference type="Gene3D" id="3.30.420.60">
    <property type="entry name" value="eRF1 domain 2"/>
    <property type="match status" value="1"/>
</dbReference>
<dbReference type="InterPro" id="IPR042226">
    <property type="entry name" value="eFR1_2_sf"/>
</dbReference>
<dbReference type="InterPro" id="IPR005140">
    <property type="entry name" value="eRF1_1_Pelota"/>
</dbReference>
<dbReference type="InterPro" id="IPR024049">
    <property type="entry name" value="eRF1_1_sf"/>
</dbReference>
<dbReference type="InterPro" id="IPR005141">
    <property type="entry name" value="eRF1_2"/>
</dbReference>
<dbReference type="InterPro" id="IPR005142">
    <property type="entry name" value="eRF1_3"/>
</dbReference>
<dbReference type="InterPro" id="IPR004403">
    <property type="entry name" value="Peptide_chain-rel_eRF1/aRF1"/>
</dbReference>
<dbReference type="InterPro" id="IPR029064">
    <property type="entry name" value="Ribosomal_eL30-like_sf"/>
</dbReference>
<dbReference type="NCBIfam" id="TIGR03676">
    <property type="entry name" value="aRF1_eRF1"/>
    <property type="match status" value="1"/>
</dbReference>
<dbReference type="PANTHER" id="PTHR10113">
    <property type="entry name" value="PEPTIDE CHAIN RELEASE FACTOR SUBUNIT 1"/>
    <property type="match status" value="1"/>
</dbReference>
<dbReference type="Pfam" id="PF03463">
    <property type="entry name" value="eRF1_1"/>
    <property type="match status" value="1"/>
</dbReference>
<dbReference type="Pfam" id="PF03464">
    <property type="entry name" value="eRF1_2"/>
    <property type="match status" value="1"/>
</dbReference>
<dbReference type="Pfam" id="PF03465">
    <property type="entry name" value="eRF1_3"/>
    <property type="match status" value="1"/>
</dbReference>
<dbReference type="SMART" id="SM01194">
    <property type="entry name" value="eRF1_1"/>
    <property type="match status" value="1"/>
</dbReference>
<dbReference type="SUPFAM" id="SSF55315">
    <property type="entry name" value="L30e-like"/>
    <property type="match status" value="1"/>
</dbReference>
<dbReference type="SUPFAM" id="SSF55481">
    <property type="entry name" value="N-terminal domain of eukaryotic peptide chain release factor subunit 1, ERF1"/>
    <property type="match status" value="1"/>
</dbReference>
<dbReference type="SUPFAM" id="SSF53137">
    <property type="entry name" value="Translational machinery components"/>
    <property type="match status" value="1"/>
</dbReference>
<name>ERF1Z_BRAOB</name>
<reference key="1">
    <citation type="journal article" date="2011" name="New Phytol.">
        <title>The cauliflower Orange gene enhances petiole elongation by suppressing expression of eukaryotic release factor 1.</title>
        <authorList>
            <person name="Zhou X."/>
            <person name="Sun T.H."/>
            <person name="Wang N."/>
            <person name="Ling H.Q."/>
            <person name="Lu S."/>
            <person name="Li L."/>
        </authorList>
    </citation>
    <scope>NUCLEOTIDE SEQUENCE [MRNA]</scope>
    <scope>FUNCTION</scope>
</reference>
<protein>
    <recommendedName>
        <fullName evidence="5">Eukaryotic peptide chain release factor subunit 1-3</fullName>
        <shortName evidence="4">BoeRF1-3</shortName>
        <shortName evidence="4">Eukaryotic release factor 1-3</shortName>
    </recommendedName>
</protein>
<sequence length="435" mass="48818">MADQESDKSIEIWKSFKLIKGLESARGNGTSMISLIMPPRDQVARVTKMLADEYGTASNIKSRVNRQSVLSAITSAQQRLKLYNKVPPNGLVLYTGTIVTDDGKEKKVTIDFEPFKPINASLYLCDNKFHTEPLNELLESDDKFGFIVMDGNGTLFGTLSGNTREVLHKFTVDLPKKHGRGGQSALRFARLRMEKRHNYVRKTAELATQFYINPATSQPNVSGLILAGSADFKTELSQSELFDPRLQAKILNVVDVSYGGENGFNQAIELSAEILSNVKFIQEKKLIGKYFEEISQDTGKYVFGVDDTLKALDMGAVETLIVWENLDINRYELKNGATGETVIKHLGKEQENDQSNFHDAESNAELEIVEKMPLLEWFANEYKRFGCTLEFVTNKSQEGSQFCRGFGGIGGLLRYQLDMRTFDELSDGEVYEDSD</sequence>
<evidence type="ECO:0000250" key="1">
    <source>
        <dbReference type="UniProtKB" id="Q39097"/>
    </source>
</evidence>
<evidence type="ECO:0000250" key="2">
    <source>
        <dbReference type="UniProtKB" id="Q9LPV8"/>
    </source>
</evidence>
<evidence type="ECO:0000269" key="3">
    <source>
    </source>
</evidence>
<evidence type="ECO:0000303" key="4">
    <source>
    </source>
</evidence>
<evidence type="ECO:0000305" key="5"/>
<accession>D2K760</accession>
<proteinExistence type="evidence at transcript level"/>
<feature type="initiator methionine" description="Removed" evidence="2">
    <location>
        <position position="1"/>
    </location>
</feature>
<feature type="chain" id="PRO_0000438019" description="Eukaryotic peptide chain release factor subunit 1-3">
    <location>
        <begin position="2"/>
        <end position="435"/>
    </location>
</feature>
<feature type="modified residue" description="N-acetylalanine" evidence="2">
    <location>
        <position position="2"/>
    </location>
</feature>